<sequence length="154" mass="17106">MKLRDSLAENNSIRLQAEANTWQEAVKIGVDLLVAADVVEPRYYQAILDGVEQFGPYFVIAPGLAMPHGRPEEGVKKTGFSLVTLKKPLEFNHEDNDPVDILITMAAVDANTHQEVGIMQIVNLFEDEANFDRLRACRTAQEVLDLIDRTNAAA</sequence>
<evidence type="ECO:0000250" key="1">
    <source>
        <dbReference type="UniProtKB" id="P69820"/>
    </source>
</evidence>
<evidence type="ECO:0000255" key="2">
    <source>
        <dbReference type="PROSITE-ProRule" id="PRU00417"/>
    </source>
</evidence>
<evidence type="ECO:0000305" key="3"/>
<dbReference type="EMBL" id="AE006468">
    <property type="protein sequence ID" value="AAL23205.1"/>
    <property type="molecule type" value="Genomic_DNA"/>
</dbReference>
<dbReference type="RefSeq" id="WP_000776531.1">
    <property type="nucleotide sequence ID" value="NC_003197.2"/>
</dbReference>
<dbReference type="SMR" id="Q8ZK88"/>
<dbReference type="STRING" id="99287.STM4385"/>
<dbReference type="PaxDb" id="99287-STM4385"/>
<dbReference type="KEGG" id="stm:STM4385"/>
<dbReference type="PATRIC" id="fig|99287.12.peg.4610"/>
<dbReference type="HOGENOM" id="CLU_072531_2_0_6"/>
<dbReference type="OMA" id="MGPYIIL"/>
<dbReference type="PhylomeDB" id="Q8ZK88"/>
<dbReference type="BioCyc" id="SENT99287:STM4385-MONOMER"/>
<dbReference type="Proteomes" id="UP000001014">
    <property type="component" value="Chromosome"/>
</dbReference>
<dbReference type="GO" id="GO:0005737">
    <property type="term" value="C:cytoplasm"/>
    <property type="evidence" value="ECO:0007669"/>
    <property type="project" value="UniProtKB-SubCell"/>
</dbReference>
<dbReference type="GO" id="GO:0016301">
    <property type="term" value="F:kinase activity"/>
    <property type="evidence" value="ECO:0007669"/>
    <property type="project" value="UniProtKB-KW"/>
</dbReference>
<dbReference type="GO" id="GO:0090585">
    <property type="term" value="F:protein-phosphocysteine-L-ascorbate-phosphotransferase system transporter activity"/>
    <property type="evidence" value="ECO:0000318"/>
    <property type="project" value="GO_Central"/>
</dbReference>
<dbReference type="GO" id="GO:0009401">
    <property type="term" value="P:phosphoenolpyruvate-dependent sugar phosphotransferase system"/>
    <property type="evidence" value="ECO:0000318"/>
    <property type="project" value="GO_Central"/>
</dbReference>
<dbReference type="CDD" id="cd00211">
    <property type="entry name" value="PTS_IIA_fru"/>
    <property type="match status" value="1"/>
</dbReference>
<dbReference type="FunFam" id="3.40.930.10:FF:000005">
    <property type="entry name" value="Ascorbate-specific phosphotransferase enzyme IIA component"/>
    <property type="match status" value="1"/>
</dbReference>
<dbReference type="Gene3D" id="3.40.930.10">
    <property type="entry name" value="Mannitol-specific EII, Chain A"/>
    <property type="match status" value="1"/>
</dbReference>
<dbReference type="InterPro" id="IPR051351">
    <property type="entry name" value="Ascorbate-PTS_EIIA_comp"/>
</dbReference>
<dbReference type="InterPro" id="IPR016152">
    <property type="entry name" value="PTrfase/Anion_transptr"/>
</dbReference>
<dbReference type="InterPro" id="IPR002178">
    <property type="entry name" value="PTS_EIIA_type-2_dom"/>
</dbReference>
<dbReference type="NCBIfam" id="NF007694">
    <property type="entry name" value="PRK10372.1"/>
    <property type="match status" value="1"/>
</dbReference>
<dbReference type="PANTHER" id="PTHR36203">
    <property type="entry name" value="ASCORBATE-SPECIFIC PTS SYSTEM EIIA COMPONENT"/>
    <property type="match status" value="1"/>
</dbReference>
<dbReference type="PANTHER" id="PTHR36203:SF1">
    <property type="entry name" value="ASCORBATE-SPECIFIC PTS SYSTEM EIIA COMPONENT"/>
    <property type="match status" value="1"/>
</dbReference>
<dbReference type="Pfam" id="PF00359">
    <property type="entry name" value="PTS_EIIA_2"/>
    <property type="match status" value="1"/>
</dbReference>
<dbReference type="SUPFAM" id="SSF55804">
    <property type="entry name" value="Phoshotransferase/anion transport protein"/>
    <property type="match status" value="1"/>
</dbReference>
<dbReference type="PROSITE" id="PS51094">
    <property type="entry name" value="PTS_EIIA_TYPE_2"/>
    <property type="match status" value="1"/>
</dbReference>
<dbReference type="PROSITE" id="PS00372">
    <property type="entry name" value="PTS_EIIA_TYPE_2_HIS"/>
    <property type="match status" value="1"/>
</dbReference>
<comment type="function">
    <text evidence="1">The phosphoenolpyruvate-dependent sugar phosphotransferase system (sugar PTS), a major carbohydrate active transport system, catalyzes the phosphorylation of incoming sugar substrates concomitantly with their translocation across the cell membrane. The enzyme II UlaABC PTS system is involved in ascorbate transport.</text>
</comment>
<comment type="subcellular location">
    <subcellularLocation>
        <location evidence="3">Cytoplasm</location>
    </subcellularLocation>
</comment>
<comment type="induction">
    <text evidence="1">Induced by L-ascorbate. Repressed by UlaR.</text>
</comment>
<comment type="domain">
    <text evidence="2">The PTS EIIA type-2 domain is phosphorylated by phospho-HPr on a histidyl residue. Then, it transfers the phosphoryl group to the PTS EIIB type-2 domain.</text>
</comment>
<accession>Q8ZK88</accession>
<keyword id="KW-0963">Cytoplasm</keyword>
<keyword id="KW-0418">Kinase</keyword>
<keyword id="KW-0597">Phosphoprotein</keyword>
<keyword id="KW-0598">Phosphotransferase system</keyword>
<keyword id="KW-1185">Reference proteome</keyword>
<keyword id="KW-0808">Transferase</keyword>
<keyword id="KW-0813">Transport</keyword>
<feature type="chain" id="PRO_0000230317" description="Ascorbate-specific PTS system EIIA component">
    <location>
        <begin position="1"/>
        <end position="154"/>
    </location>
</feature>
<feature type="domain" description="PTS EIIA type-2" evidence="2">
    <location>
        <begin position="6"/>
        <end position="150"/>
    </location>
</feature>
<feature type="active site" description="Tele-phosphohistidine intermediate; for EIIA activity" evidence="2">
    <location>
        <position position="68"/>
    </location>
</feature>
<feature type="modified residue" description="Phosphohistidine" evidence="1">
    <location>
        <position position="68"/>
    </location>
</feature>
<proteinExistence type="inferred from homology"/>
<gene>
    <name type="primary">ulaC</name>
    <name type="ordered locus">STM4385</name>
</gene>
<reference key="1">
    <citation type="journal article" date="2001" name="Nature">
        <title>Complete genome sequence of Salmonella enterica serovar Typhimurium LT2.</title>
        <authorList>
            <person name="McClelland M."/>
            <person name="Sanderson K.E."/>
            <person name="Spieth J."/>
            <person name="Clifton S.W."/>
            <person name="Latreille P."/>
            <person name="Courtney L."/>
            <person name="Porwollik S."/>
            <person name="Ali J."/>
            <person name="Dante M."/>
            <person name="Du F."/>
            <person name="Hou S."/>
            <person name="Layman D."/>
            <person name="Leonard S."/>
            <person name="Nguyen C."/>
            <person name="Scott K."/>
            <person name="Holmes A."/>
            <person name="Grewal N."/>
            <person name="Mulvaney E."/>
            <person name="Ryan E."/>
            <person name="Sun H."/>
            <person name="Florea L."/>
            <person name="Miller W."/>
            <person name="Stoneking T."/>
            <person name="Nhan M."/>
            <person name="Waterston R."/>
            <person name="Wilson R.K."/>
        </authorList>
    </citation>
    <scope>NUCLEOTIDE SEQUENCE [LARGE SCALE GENOMIC DNA]</scope>
    <source>
        <strain>LT2 / SGSC1412 / ATCC 700720</strain>
    </source>
</reference>
<organism>
    <name type="scientific">Salmonella typhimurium (strain LT2 / SGSC1412 / ATCC 700720)</name>
    <dbReference type="NCBI Taxonomy" id="99287"/>
    <lineage>
        <taxon>Bacteria</taxon>
        <taxon>Pseudomonadati</taxon>
        <taxon>Pseudomonadota</taxon>
        <taxon>Gammaproteobacteria</taxon>
        <taxon>Enterobacterales</taxon>
        <taxon>Enterobacteriaceae</taxon>
        <taxon>Salmonella</taxon>
    </lineage>
</organism>
<name>ULAC_SALTY</name>
<protein>
    <recommendedName>
        <fullName evidence="1">Ascorbate-specific PTS system EIIA component</fullName>
    </recommendedName>
    <alternativeName>
        <fullName evidence="1">Ascorbate-specific phosphotransferase enzyme IIA component</fullName>
    </alternativeName>
</protein>